<accession>Q9JHG6</accession>
<accession>Q7TNY3</accession>
<accession>Q91WQ4</accession>
<accession>Q9JK50</accession>
<accession>Q9JK51</accession>
<accession>Q9JKK2</accession>
<accession>Q9JKK3</accession>
<organism>
    <name type="scientific">Mus musculus</name>
    <name type="common">Mouse</name>
    <dbReference type="NCBI Taxonomy" id="10090"/>
    <lineage>
        <taxon>Eukaryota</taxon>
        <taxon>Metazoa</taxon>
        <taxon>Chordata</taxon>
        <taxon>Craniata</taxon>
        <taxon>Vertebrata</taxon>
        <taxon>Euteleostomi</taxon>
        <taxon>Mammalia</taxon>
        <taxon>Eutheria</taxon>
        <taxon>Euarchontoglires</taxon>
        <taxon>Glires</taxon>
        <taxon>Rodentia</taxon>
        <taxon>Myomorpha</taxon>
        <taxon>Muroidea</taxon>
        <taxon>Muridae</taxon>
        <taxon>Murinae</taxon>
        <taxon>Mus</taxon>
        <taxon>Mus</taxon>
    </lineage>
</organism>
<evidence type="ECO:0000250" key="1">
    <source>
        <dbReference type="UniProtKB" id="P53805"/>
    </source>
</evidence>
<evidence type="ECO:0000256" key="2">
    <source>
        <dbReference type="SAM" id="MobiDB-lite"/>
    </source>
</evidence>
<evidence type="ECO:0000269" key="3">
    <source>
    </source>
</evidence>
<evidence type="ECO:0000269" key="4">
    <source>
    </source>
</evidence>
<evidence type="ECO:0000303" key="5">
    <source>
    </source>
</evidence>
<evidence type="ECO:0000303" key="6">
    <source>
    </source>
</evidence>
<evidence type="ECO:0000303" key="7">
    <source>
    </source>
</evidence>
<evidence type="ECO:0000303" key="8">
    <source>
    </source>
</evidence>
<evidence type="ECO:0000303" key="9">
    <source>
    </source>
</evidence>
<evidence type="ECO:0000303" key="10">
    <source ref="4"/>
</evidence>
<evidence type="ECO:0000305" key="11"/>
<evidence type="ECO:0007744" key="12">
    <source>
    </source>
</evidence>
<evidence type="ECO:0007829" key="13">
    <source>
        <dbReference type="PDB" id="1WEY"/>
    </source>
</evidence>
<reference key="1">
    <citation type="journal article" date="2000" name="J. Biol. Chem.">
        <title>A protein encoded within the Down syndrome critical region is enriched in striated muscles and inhibits calcineurin signaling.</title>
        <authorList>
            <person name="Rothermel B."/>
            <person name="Vega R.B."/>
            <person name="Yang J."/>
            <person name="Wu H."/>
            <person name="Bassel-Duby R."/>
            <person name="Williams R.S."/>
        </authorList>
    </citation>
    <scope>NUCLEOTIDE SEQUENCE [MRNA] (ISOFORMS B AND E)</scope>
</reference>
<reference key="2">
    <citation type="journal article" date="2001" name="Mech. Dev.">
        <title>Dscr1, a novel endogenous inhibitor of calcineurin signaling, is expressed in the primitive ventricle of the heart and during neurogenesis.</title>
        <authorList>
            <person name="Casas C."/>
            <person name="Martinez S."/>
            <person name="Pritchard M.A."/>
            <person name="Fuentes J.J."/>
            <person name="Nadal M."/>
            <person name="Guimera J."/>
            <person name="Arbones M."/>
            <person name="Florez J."/>
            <person name="Soriano E."/>
            <person name="Estivill X."/>
            <person name="Alcantara S."/>
        </authorList>
    </citation>
    <scope>NUCLEOTIDE SEQUENCE [MRNA] (ISOFORM E)</scope>
    <scope>FUNCTION</scope>
    <scope>TISSUE SPECIFICITY</scope>
    <source>
        <tissue>Fetal brain</tissue>
    </source>
</reference>
<reference key="3">
    <citation type="journal article" date="2003" name="Biochem. J.">
        <title>Phosphorylation of calcipressin 1 increases its ability to inhibit calcineurin and decreases calcipressin half-life.</title>
        <authorList>
            <person name="Genesca L."/>
            <person name="Aubareda A."/>
            <person name="Fuentes J.J."/>
            <person name="Estivill X."/>
            <person name="De La Luna S."/>
            <person name="Perez-Riba M."/>
        </authorList>
    </citation>
    <scope>NUCLEOTIDE SEQUENCE [MRNA] (ISOFORM A)</scope>
    <scope>INTERACTION WITH PPP3CA</scope>
    <scope>PHOSPHORYLATION</scope>
    <scope>TISSUE SPECIFICITY</scope>
    <source>
        <strain>NIH Swiss</strain>
        <tissue>Heart</tissue>
    </source>
</reference>
<reference key="4">
    <citation type="submission" date="2000-05" db="EMBL/GenBank/DDBJ databases">
        <title>Down syndrome candidate region 1 (Dscr1), one of three alternatively spliced exon 1 transcripts.</title>
        <authorList>
            <person name="Fuentes J.J."/>
            <person name="Pritchard M.A."/>
            <person name="Pucharcos C."/>
            <person name="Estivill X."/>
        </authorList>
    </citation>
    <scope>NUCLEOTIDE SEQUENCE [MRNA] (ISOFORMS B AND C)</scope>
</reference>
<reference key="5">
    <citation type="journal article" date="2005" name="Science">
        <title>The transcriptional landscape of the mammalian genome.</title>
        <authorList>
            <person name="Carninci P."/>
            <person name="Kasukawa T."/>
            <person name="Katayama S."/>
            <person name="Gough J."/>
            <person name="Frith M.C."/>
            <person name="Maeda N."/>
            <person name="Oyama R."/>
            <person name="Ravasi T."/>
            <person name="Lenhard B."/>
            <person name="Wells C."/>
            <person name="Kodzius R."/>
            <person name="Shimokawa K."/>
            <person name="Bajic V.B."/>
            <person name="Brenner S.E."/>
            <person name="Batalov S."/>
            <person name="Forrest A.R."/>
            <person name="Zavolan M."/>
            <person name="Davis M.J."/>
            <person name="Wilming L.G."/>
            <person name="Aidinis V."/>
            <person name="Allen J.E."/>
            <person name="Ambesi-Impiombato A."/>
            <person name="Apweiler R."/>
            <person name="Aturaliya R.N."/>
            <person name="Bailey T.L."/>
            <person name="Bansal M."/>
            <person name="Baxter L."/>
            <person name="Beisel K.W."/>
            <person name="Bersano T."/>
            <person name="Bono H."/>
            <person name="Chalk A.M."/>
            <person name="Chiu K.P."/>
            <person name="Choudhary V."/>
            <person name="Christoffels A."/>
            <person name="Clutterbuck D.R."/>
            <person name="Crowe M.L."/>
            <person name="Dalla E."/>
            <person name="Dalrymple B.P."/>
            <person name="de Bono B."/>
            <person name="Della Gatta G."/>
            <person name="di Bernardo D."/>
            <person name="Down T."/>
            <person name="Engstrom P."/>
            <person name="Fagiolini M."/>
            <person name="Faulkner G."/>
            <person name="Fletcher C.F."/>
            <person name="Fukushima T."/>
            <person name="Furuno M."/>
            <person name="Futaki S."/>
            <person name="Gariboldi M."/>
            <person name="Georgii-Hemming P."/>
            <person name="Gingeras T.R."/>
            <person name="Gojobori T."/>
            <person name="Green R.E."/>
            <person name="Gustincich S."/>
            <person name="Harbers M."/>
            <person name="Hayashi Y."/>
            <person name="Hensch T.K."/>
            <person name="Hirokawa N."/>
            <person name="Hill D."/>
            <person name="Huminiecki L."/>
            <person name="Iacono M."/>
            <person name="Ikeo K."/>
            <person name="Iwama A."/>
            <person name="Ishikawa T."/>
            <person name="Jakt M."/>
            <person name="Kanapin A."/>
            <person name="Katoh M."/>
            <person name="Kawasawa Y."/>
            <person name="Kelso J."/>
            <person name="Kitamura H."/>
            <person name="Kitano H."/>
            <person name="Kollias G."/>
            <person name="Krishnan S.P."/>
            <person name="Kruger A."/>
            <person name="Kummerfeld S.K."/>
            <person name="Kurochkin I.V."/>
            <person name="Lareau L.F."/>
            <person name="Lazarevic D."/>
            <person name="Lipovich L."/>
            <person name="Liu J."/>
            <person name="Liuni S."/>
            <person name="McWilliam S."/>
            <person name="Madan Babu M."/>
            <person name="Madera M."/>
            <person name="Marchionni L."/>
            <person name="Matsuda H."/>
            <person name="Matsuzawa S."/>
            <person name="Miki H."/>
            <person name="Mignone F."/>
            <person name="Miyake S."/>
            <person name="Morris K."/>
            <person name="Mottagui-Tabar S."/>
            <person name="Mulder N."/>
            <person name="Nakano N."/>
            <person name="Nakauchi H."/>
            <person name="Ng P."/>
            <person name="Nilsson R."/>
            <person name="Nishiguchi S."/>
            <person name="Nishikawa S."/>
            <person name="Nori F."/>
            <person name="Ohara O."/>
            <person name="Okazaki Y."/>
            <person name="Orlando V."/>
            <person name="Pang K.C."/>
            <person name="Pavan W.J."/>
            <person name="Pavesi G."/>
            <person name="Pesole G."/>
            <person name="Petrovsky N."/>
            <person name="Piazza S."/>
            <person name="Reed J."/>
            <person name="Reid J.F."/>
            <person name="Ring B.Z."/>
            <person name="Ringwald M."/>
            <person name="Rost B."/>
            <person name="Ruan Y."/>
            <person name="Salzberg S.L."/>
            <person name="Sandelin A."/>
            <person name="Schneider C."/>
            <person name="Schoenbach C."/>
            <person name="Sekiguchi K."/>
            <person name="Semple C.A."/>
            <person name="Seno S."/>
            <person name="Sessa L."/>
            <person name="Sheng Y."/>
            <person name="Shibata Y."/>
            <person name="Shimada H."/>
            <person name="Shimada K."/>
            <person name="Silva D."/>
            <person name="Sinclair B."/>
            <person name="Sperling S."/>
            <person name="Stupka E."/>
            <person name="Sugiura K."/>
            <person name="Sultana R."/>
            <person name="Takenaka Y."/>
            <person name="Taki K."/>
            <person name="Tammoja K."/>
            <person name="Tan S.L."/>
            <person name="Tang S."/>
            <person name="Taylor M.S."/>
            <person name="Tegner J."/>
            <person name="Teichmann S.A."/>
            <person name="Ueda H.R."/>
            <person name="van Nimwegen E."/>
            <person name="Verardo R."/>
            <person name="Wei C.L."/>
            <person name="Yagi K."/>
            <person name="Yamanishi H."/>
            <person name="Zabarovsky E."/>
            <person name="Zhu S."/>
            <person name="Zimmer A."/>
            <person name="Hide W."/>
            <person name="Bult C."/>
            <person name="Grimmond S.M."/>
            <person name="Teasdale R.D."/>
            <person name="Liu E.T."/>
            <person name="Brusic V."/>
            <person name="Quackenbush J."/>
            <person name="Wahlestedt C."/>
            <person name="Mattick J.S."/>
            <person name="Hume D.A."/>
            <person name="Kai C."/>
            <person name="Sasaki D."/>
            <person name="Tomaru Y."/>
            <person name="Fukuda S."/>
            <person name="Kanamori-Katayama M."/>
            <person name="Suzuki M."/>
            <person name="Aoki J."/>
            <person name="Arakawa T."/>
            <person name="Iida J."/>
            <person name="Imamura K."/>
            <person name="Itoh M."/>
            <person name="Kato T."/>
            <person name="Kawaji H."/>
            <person name="Kawagashira N."/>
            <person name="Kawashima T."/>
            <person name="Kojima M."/>
            <person name="Kondo S."/>
            <person name="Konno H."/>
            <person name="Nakano K."/>
            <person name="Ninomiya N."/>
            <person name="Nishio T."/>
            <person name="Okada M."/>
            <person name="Plessy C."/>
            <person name="Shibata K."/>
            <person name="Shiraki T."/>
            <person name="Suzuki S."/>
            <person name="Tagami M."/>
            <person name="Waki K."/>
            <person name="Watahiki A."/>
            <person name="Okamura-Oho Y."/>
            <person name="Suzuki H."/>
            <person name="Kawai J."/>
            <person name="Hayashizaki Y."/>
        </authorList>
    </citation>
    <scope>NUCLEOTIDE SEQUENCE [LARGE SCALE MRNA] (ISOFORMS A AND C)</scope>
    <source>
        <strain>C57BL/6J</strain>
        <tissue>Embryonic stem cell</tissue>
    </source>
</reference>
<reference key="6">
    <citation type="journal article" date="2009" name="PLoS Biol.">
        <title>Lineage-specific biology revealed by a finished genome assembly of the mouse.</title>
        <authorList>
            <person name="Church D.M."/>
            <person name="Goodstadt L."/>
            <person name="Hillier L.W."/>
            <person name="Zody M.C."/>
            <person name="Goldstein S."/>
            <person name="She X."/>
            <person name="Bult C.J."/>
            <person name="Agarwala R."/>
            <person name="Cherry J.L."/>
            <person name="DiCuccio M."/>
            <person name="Hlavina W."/>
            <person name="Kapustin Y."/>
            <person name="Meric P."/>
            <person name="Maglott D."/>
            <person name="Birtle Z."/>
            <person name="Marques A.C."/>
            <person name="Graves T."/>
            <person name="Zhou S."/>
            <person name="Teague B."/>
            <person name="Potamousis K."/>
            <person name="Churas C."/>
            <person name="Place M."/>
            <person name="Herschleb J."/>
            <person name="Runnheim R."/>
            <person name="Forrest D."/>
            <person name="Amos-Landgraf J."/>
            <person name="Schwartz D.C."/>
            <person name="Cheng Z."/>
            <person name="Lindblad-Toh K."/>
            <person name="Eichler E.E."/>
            <person name="Ponting C.P."/>
        </authorList>
    </citation>
    <scope>NUCLEOTIDE SEQUENCE [LARGE SCALE GENOMIC DNA]</scope>
    <source>
        <strain>C57BL/6J</strain>
        <tissue>Heart</tissue>
    </source>
</reference>
<reference key="7">
    <citation type="journal article" date="2004" name="Genome Res.">
        <title>The status, quality, and expansion of the NIH full-length cDNA project: the Mammalian Gene Collection (MGC).</title>
        <authorList>
            <consortium name="The MGC Project Team"/>
        </authorList>
    </citation>
    <scope>NUCLEOTIDE SEQUENCE [LARGE SCALE MRNA] (ISOFORM B)</scope>
    <source>
        <tissue>Kidney</tissue>
    </source>
</reference>
<reference key="8">
    <citation type="journal article" date="2000" name="Gene">
        <title>The murine DSCR1-like (Down syndrome candidate region 1) gene family: conserved synteny with the human orthologous genes.</title>
        <authorList>
            <person name="Strippoli P."/>
            <person name="Petrini M."/>
            <person name="Lenzi L."/>
            <person name="Carinci P."/>
            <person name="Zannotti M."/>
        </authorList>
    </citation>
    <scope>NUCLEOTIDE SEQUENCE [MRNA] OF 52-251 (ISOFORM A)</scope>
    <source>
        <strain>BALB/cJ</strain>
        <tissue>Brain</tissue>
    </source>
</reference>
<reference key="9">
    <citation type="journal article" date="2010" name="Cell">
        <title>A tissue-specific atlas of mouse protein phosphorylation and expression.</title>
        <authorList>
            <person name="Huttlin E.L."/>
            <person name="Jedrychowski M.P."/>
            <person name="Elias J.E."/>
            <person name="Goswami T."/>
            <person name="Rad R."/>
            <person name="Beausoleil S.A."/>
            <person name="Villen J."/>
            <person name="Haas W."/>
            <person name="Sowa M.E."/>
            <person name="Gygi S.P."/>
        </authorList>
    </citation>
    <scope>PHOSPHORYLATION [LARGE SCALE ANALYSIS] AT SER-216</scope>
    <scope>IDENTIFICATION BY MASS SPECTROMETRY [LARGE SCALE ANALYSIS]</scope>
    <source>
        <tissue>Brain</tissue>
    </source>
</reference>
<reference key="10">
    <citation type="submission" date="2004-05" db="PDB data bank">
        <title>Solution structure of RRM domain in calcipressin 1.</title>
        <authorList>
            <consortium name="RIKEN structural genomics initiative (RSGI)"/>
        </authorList>
    </citation>
    <scope>STRUCTURE BY NMR OF 67-156</scope>
</reference>
<comment type="function">
    <text evidence="3">Inhibits calcineurin-dependent transcriptional responses by binding to the catalytic domain of calcineurin A. Could play a role during central nervous system development (PubMed:11231093).</text>
</comment>
<comment type="subunit">
    <text evidence="1 4">Interacts with RAF1 and PPP3R1 (By similarity). Interacts with PPP3CA (PubMed:12809556).</text>
</comment>
<comment type="interaction">
    <interactant intactId="EBI-644061">
        <id>Q9JHG6</id>
    </interactant>
    <interactant intactId="EBI-80344">
        <id>Q61214</id>
        <label>Dyrk1a</label>
    </interactant>
    <organismsDiffer>false</organismsDiffer>
    <experiments>2</experiments>
</comment>
<comment type="interaction">
    <interactant intactId="EBI-644061">
        <id>Q9JHG6</id>
    </interactant>
    <interactant intactId="EBI-645094">
        <id>P35922</id>
        <label>Fmr1</label>
    </interactant>
    <organismsDiffer>false</organismsDiffer>
    <experiments>3</experiments>
</comment>
<comment type="alternative products">
    <event type="alternative splicing"/>
    <isoform>
        <id>Q9JHG6-1</id>
        <name>A</name>
        <name>1</name>
        <name evidence="7">CALP1-L</name>
        <sequence type="displayed"/>
    </isoform>
    <isoform>
        <id>Q9JHG6-2</id>
        <name>B</name>
        <name>4</name>
        <sequence type="described" ref="VSP_001317"/>
    </isoform>
    <isoform>
        <id>Q9JHG6-3</id>
        <name>C</name>
        <sequence type="described" ref="VSP_001318"/>
    </isoform>
    <isoform>
        <id>Q9JHG6-4</id>
        <name>E</name>
        <name evidence="7">CALP1-S</name>
        <sequence type="described" ref="VSP_059568"/>
    </isoform>
    <text>Additional isoforms seem to exist.</text>
</comment>
<comment type="tissue specificity">
    <text evidence="3 4">Highly expressed in heart and skeletal muscle. Also expressed in all other tissues.</text>
</comment>
<comment type="PTM">
    <text evidence="1">Phosphorylation increases its ability to inhibit calcineurin and decreases protein half-life.</text>
</comment>
<comment type="similarity">
    <text evidence="11">Belongs to the RCAN family.</text>
</comment>
<comment type="sequence caution" evidence="11">
    <conflict type="erroneous initiation">
        <sequence resource="EMBL-CDS" id="AAF91461"/>
    </conflict>
    <text>Truncated N-terminus.</text>
</comment>
<feature type="chain" id="PRO_0000211415" description="Calcipressin-1">
    <location>
        <begin position="1"/>
        <end position="251"/>
    </location>
</feature>
<feature type="region of interest" description="Disordered" evidence="2">
    <location>
        <begin position="216"/>
        <end position="251"/>
    </location>
</feature>
<feature type="compositionally biased region" description="Acidic residues" evidence="2">
    <location>
        <begin position="216"/>
        <end position="227"/>
    </location>
</feature>
<feature type="modified residue" description="Phosphoserine" evidence="1">
    <location>
        <position position="161"/>
    </location>
</feature>
<feature type="modified residue" description="Phosphoserine" evidence="1">
    <location>
        <position position="165"/>
    </location>
</feature>
<feature type="modified residue" description="Phosphoserine" evidence="12">
    <location>
        <position position="216"/>
    </location>
</feature>
<feature type="splice variant" id="VSP_001318" description="In isoform C." evidence="9 10">
    <location>
        <begin position="1"/>
        <end position="133"/>
    </location>
</feature>
<feature type="splice variant" id="VSP_001317" description="In isoform B." evidence="5 8 10">
    <original>MEDGVAGPRLGEVAEAVEARAPRRVTLRPFAPFSAAAEGDGGGGGDWSFIDCEMEEVDLQDLPSATIACHLDPRVFVDGLC</original>
    <variation>MHFRDFSYNFSSLIACVANDDVFSESET</variation>
    <location>
        <begin position="1"/>
        <end position="81"/>
    </location>
</feature>
<feature type="splice variant" id="VSP_059568" description="In isoform E." evidence="5 6">
    <location>
        <begin position="1"/>
        <end position="53"/>
    </location>
</feature>
<feature type="sequence conflict" description="In Ref. 1; AAF63485/AAF63486." evidence="11" ref="1">
    <original>T</original>
    <variation>P</variation>
    <location>
        <position position="205"/>
    </location>
</feature>
<feature type="strand" evidence="13">
    <location>
        <begin position="67"/>
        <end position="69"/>
    </location>
</feature>
<feature type="helix" evidence="13">
    <location>
        <begin position="73"/>
        <end position="76"/>
    </location>
</feature>
<feature type="turn" evidence="13">
    <location>
        <begin position="78"/>
        <end position="80"/>
    </location>
</feature>
<feature type="helix" evidence="13">
    <location>
        <begin position="81"/>
        <end position="90"/>
    </location>
</feature>
<feature type="strand" evidence="13">
    <location>
        <begin position="97"/>
        <end position="101"/>
    </location>
</feature>
<feature type="turn" evidence="13">
    <location>
        <begin position="102"/>
        <end position="105"/>
    </location>
</feature>
<feature type="strand" evidence="13">
    <location>
        <begin position="106"/>
        <end position="110"/>
    </location>
</feature>
<feature type="helix" evidence="13">
    <location>
        <begin position="116"/>
        <end position="122"/>
    </location>
</feature>
<feature type="strand" evidence="13">
    <location>
        <begin position="127"/>
        <end position="129"/>
    </location>
</feature>
<feature type="strand" evidence="13">
    <location>
        <begin position="135"/>
        <end position="137"/>
    </location>
</feature>
<feature type="sequence conflict" description="In Ref. 1; AAF63486." evidence="11" ref="1">
    <original>H</original>
    <variation>D</variation>
    <location sequence="Q9JHG6-2">
        <position position="2"/>
    </location>
</feature>
<feature type="sequence conflict" description="In Ref. 4; AAF72701." evidence="11" ref="4">
    <original>F</original>
    <variation>Y</variation>
    <location sequence="Q9JHG6-2">
        <position position="6"/>
    </location>
</feature>
<protein>
    <recommendedName>
        <fullName>Calcipressin-1</fullName>
    </recommendedName>
    <alternativeName>
        <fullName>Down syndrome critical region protein 1 homolog</fullName>
    </alternativeName>
    <alternativeName>
        <fullName>Myocyte-enriched calcineurin-interacting protein 1</fullName>
        <shortName>MCIP1</shortName>
    </alternativeName>
    <alternativeName>
        <fullName>Regulator of calcineurin 1</fullName>
    </alternativeName>
</protein>
<keyword id="KW-0002">3D-structure</keyword>
<keyword id="KW-0025">Alternative splicing</keyword>
<keyword id="KW-0597">Phosphoprotein</keyword>
<keyword id="KW-1185">Reference proteome</keyword>
<sequence>MEDGVAGPRLGEVAEAVEARAPRRVTLRPFAPFSAAAEGDGGGGGDWSFIDCEMEEVDLQDLPSATIACHLDPRVFVDGLCRAKFESLFRTYDKDTTFQYFKSFKRVRINFSNPLSAADARLRLHKTEFLGKEMKLYFAQTLHIGSSHLAPPNPDKQFLISPPASPPVGWKQVEDATPVINYDLLYAISKLGPGEKYELHAATDTTPSVVVHVCESDQENEEEEEEMERMKRPKPKIIQTRRPEYTPIHLS</sequence>
<gene>
    <name type="primary">Rcan1</name>
    <name type="synonym">Dscr1</name>
</gene>
<dbReference type="EMBL" id="AF237789">
    <property type="protein sequence ID" value="AAF63485.1"/>
    <property type="molecule type" value="mRNA"/>
</dbReference>
<dbReference type="EMBL" id="AF237790">
    <property type="protein sequence ID" value="AAF63486.1"/>
    <property type="molecule type" value="mRNA"/>
</dbReference>
<dbReference type="EMBL" id="AF260717">
    <property type="protein sequence ID" value="AAF70343.1"/>
    <property type="molecule type" value="mRNA"/>
</dbReference>
<dbReference type="EMBL" id="AY325904">
    <property type="protein sequence ID" value="AAP96744.1"/>
    <property type="molecule type" value="mRNA"/>
</dbReference>
<dbReference type="EMBL" id="AF263239">
    <property type="protein sequence ID" value="AAF72701.1"/>
    <property type="molecule type" value="mRNA"/>
</dbReference>
<dbReference type="EMBL" id="AF263240">
    <property type="protein sequence ID" value="AAF72702.1"/>
    <property type="molecule type" value="mRNA"/>
</dbReference>
<dbReference type="EMBL" id="AK010696">
    <property type="protein sequence ID" value="BAB27128.1"/>
    <property type="molecule type" value="mRNA"/>
</dbReference>
<dbReference type="EMBL" id="AK146764">
    <property type="protein sequence ID" value="BAE27416.1"/>
    <property type="molecule type" value="mRNA"/>
</dbReference>
<dbReference type="EMBL" id="AC162305">
    <property type="status" value="NOT_ANNOTATED_CDS"/>
    <property type="molecule type" value="Genomic_DNA"/>
</dbReference>
<dbReference type="EMBL" id="AC174448">
    <property type="status" value="NOT_ANNOTATED_CDS"/>
    <property type="molecule type" value="Genomic_DNA"/>
</dbReference>
<dbReference type="EMBL" id="BC013551">
    <property type="protein sequence ID" value="AAH13551.1"/>
    <property type="molecule type" value="mRNA"/>
</dbReference>
<dbReference type="EMBL" id="AF282255">
    <property type="protein sequence ID" value="AAF91461.1"/>
    <property type="status" value="ALT_INIT"/>
    <property type="molecule type" value="mRNA"/>
</dbReference>
<dbReference type="CCDS" id="CCDS28337.1">
    <molecule id="Q9JHG6-2"/>
</dbReference>
<dbReference type="CCDS" id="CCDS37405.1">
    <molecule id="Q9JHG6-1"/>
</dbReference>
<dbReference type="RefSeq" id="NP_001075018.1">
    <molecule id="Q9JHG6-1"/>
    <property type="nucleotide sequence ID" value="NM_001081549.2"/>
</dbReference>
<dbReference type="RefSeq" id="NP_062339.2">
    <molecule id="Q9JHG6-2"/>
    <property type="nucleotide sequence ID" value="NM_019466.4"/>
</dbReference>
<dbReference type="PDB" id="1WEY">
    <property type="method" value="NMR"/>
    <property type="chains" value="A=67-156"/>
</dbReference>
<dbReference type="PDBsum" id="1WEY"/>
<dbReference type="SMR" id="Q9JHG6"/>
<dbReference type="BioGRID" id="207725">
    <property type="interactions" value="2"/>
</dbReference>
<dbReference type="FunCoup" id="Q9JHG6">
    <property type="interactions" value="2300"/>
</dbReference>
<dbReference type="IntAct" id="Q9JHG6">
    <property type="interactions" value="4"/>
</dbReference>
<dbReference type="MINT" id="Q9JHG6"/>
<dbReference type="STRING" id="10090.ENSMUSP00000060394"/>
<dbReference type="GlyGen" id="Q9JHG6">
    <property type="glycosylation" value="1 site, 1 N-linked glycan (1 site)"/>
</dbReference>
<dbReference type="iPTMnet" id="Q9JHG6"/>
<dbReference type="PhosphoSitePlus" id="Q9JHG6"/>
<dbReference type="jPOST" id="Q9JHG6"/>
<dbReference type="PaxDb" id="10090-ENSMUSP00000060394"/>
<dbReference type="ProteomicsDB" id="255166">
    <molecule id="Q9JHG6-1"/>
</dbReference>
<dbReference type="ProteomicsDB" id="255167">
    <molecule id="Q9JHG6-2"/>
</dbReference>
<dbReference type="ProteomicsDB" id="255168">
    <molecule id="Q9JHG6-3"/>
</dbReference>
<dbReference type="ProteomicsDB" id="329214"/>
<dbReference type="Pumba" id="Q9JHG6"/>
<dbReference type="Antibodypedia" id="22959">
    <property type="antibodies" value="575 antibodies from 35 providers"/>
</dbReference>
<dbReference type="DNASU" id="54720"/>
<dbReference type="Ensembl" id="ENSMUST00000023672.10">
    <molecule id="Q9JHG6-2"/>
    <property type="protein sequence ID" value="ENSMUSP00000023672.8"/>
    <property type="gene ID" value="ENSMUSG00000022951.19"/>
</dbReference>
<dbReference type="Ensembl" id="ENSMUST00000060005.15">
    <molecule id="Q9JHG6-1"/>
    <property type="protein sequence ID" value="ENSMUSP00000060394.9"/>
    <property type="gene ID" value="ENSMUSG00000022951.19"/>
</dbReference>
<dbReference type="Ensembl" id="ENSMUST00000231410.2">
    <molecule id="Q9JHG6-3"/>
    <property type="protein sequence ID" value="ENSMUSP00000156110.2"/>
    <property type="gene ID" value="ENSMUSG00000022951.19"/>
</dbReference>
<dbReference type="Ensembl" id="ENSMUST00000232197.2">
    <molecule id="Q9JHG6-3"/>
    <property type="protein sequence ID" value="ENSMUSP00000155863.2"/>
    <property type="gene ID" value="ENSMUSG00000022951.19"/>
</dbReference>
<dbReference type="Ensembl" id="ENSMUST00000232239.2">
    <molecule id="Q9JHG6-4"/>
    <property type="protein sequence ID" value="ENSMUSP00000156053.2"/>
    <property type="gene ID" value="ENSMUSG00000022951.19"/>
</dbReference>
<dbReference type="GeneID" id="54720"/>
<dbReference type="KEGG" id="mmu:54720"/>
<dbReference type="UCSC" id="uc007zze.2">
    <property type="organism name" value="mouse"/>
</dbReference>
<dbReference type="AGR" id="MGI:1890564"/>
<dbReference type="CTD" id="1827"/>
<dbReference type="MGI" id="MGI:1890564">
    <property type="gene designation" value="Rcan1"/>
</dbReference>
<dbReference type="VEuPathDB" id="HostDB:ENSMUSG00000022951"/>
<dbReference type="eggNOG" id="KOG4019">
    <property type="taxonomic scope" value="Eukaryota"/>
</dbReference>
<dbReference type="GeneTree" id="ENSGT00940000159870"/>
<dbReference type="HOGENOM" id="CLU_076190_2_0_1"/>
<dbReference type="InParanoid" id="Q9JHG6"/>
<dbReference type="OMA" id="RIMQTRC"/>
<dbReference type="OrthoDB" id="17212at2759"/>
<dbReference type="PhylomeDB" id="Q9JHG6"/>
<dbReference type="TreeFam" id="TF313579"/>
<dbReference type="BioGRID-ORCS" id="54720">
    <property type="hits" value="2 hits in 78 CRISPR screens"/>
</dbReference>
<dbReference type="ChiTaRS" id="Rcan1">
    <property type="organism name" value="mouse"/>
</dbReference>
<dbReference type="EvolutionaryTrace" id="Q9JHG6"/>
<dbReference type="PRO" id="PR:Q9JHG6"/>
<dbReference type="Proteomes" id="UP000000589">
    <property type="component" value="Chromosome 16"/>
</dbReference>
<dbReference type="RNAct" id="Q9JHG6">
    <property type="molecule type" value="protein"/>
</dbReference>
<dbReference type="Bgee" id="ENSMUSG00000022951">
    <property type="expression patterns" value="Expressed in epithelium of lens and 291 other cell types or tissues"/>
</dbReference>
<dbReference type="ExpressionAtlas" id="Q9JHG6">
    <property type="expression patterns" value="baseline and differential"/>
</dbReference>
<dbReference type="GO" id="GO:0005737">
    <property type="term" value="C:cytoplasm"/>
    <property type="evidence" value="ECO:0000314"/>
    <property type="project" value="MGI"/>
</dbReference>
<dbReference type="GO" id="GO:0005634">
    <property type="term" value="C:nucleus"/>
    <property type="evidence" value="ECO:0000314"/>
    <property type="project" value="MGI"/>
</dbReference>
<dbReference type="GO" id="GO:0003676">
    <property type="term" value="F:nucleic acid binding"/>
    <property type="evidence" value="ECO:0007669"/>
    <property type="project" value="InterPro"/>
</dbReference>
<dbReference type="GO" id="GO:0004864">
    <property type="term" value="F:protein phosphatase inhibitor activity"/>
    <property type="evidence" value="ECO:0000314"/>
    <property type="project" value="MGI"/>
</dbReference>
<dbReference type="GO" id="GO:0033173">
    <property type="term" value="P:calcineurin-NFAT signaling cascade"/>
    <property type="evidence" value="ECO:0000315"/>
    <property type="project" value="MGI"/>
</dbReference>
<dbReference type="GO" id="GO:0031987">
    <property type="term" value="P:locomotion involved in locomotory behavior"/>
    <property type="evidence" value="ECO:0000316"/>
    <property type="project" value="MGI"/>
</dbReference>
<dbReference type="GO" id="GO:0070885">
    <property type="term" value="P:negative regulation of calcineurin-NFAT signaling cascade"/>
    <property type="evidence" value="ECO:0000250"/>
    <property type="project" value="UniProtKB"/>
</dbReference>
<dbReference type="GO" id="GO:0051151">
    <property type="term" value="P:negative regulation of smooth muscle cell differentiation"/>
    <property type="evidence" value="ECO:0007669"/>
    <property type="project" value="Ensembl"/>
</dbReference>
<dbReference type="GO" id="GO:0043627">
    <property type="term" value="P:response to estrogen"/>
    <property type="evidence" value="ECO:0007669"/>
    <property type="project" value="Ensembl"/>
</dbReference>
<dbReference type="GO" id="GO:0002931">
    <property type="term" value="P:response to ischemia"/>
    <property type="evidence" value="ECO:0000315"/>
    <property type="project" value="MGI"/>
</dbReference>
<dbReference type="GO" id="GO:0009612">
    <property type="term" value="P:response to mechanical stimulus"/>
    <property type="evidence" value="ECO:0007669"/>
    <property type="project" value="Ensembl"/>
</dbReference>
<dbReference type="GO" id="GO:0006979">
    <property type="term" value="P:response to oxidative stress"/>
    <property type="evidence" value="ECO:0000316"/>
    <property type="project" value="MGI"/>
</dbReference>
<dbReference type="GO" id="GO:0006950">
    <property type="term" value="P:response to stress"/>
    <property type="evidence" value="ECO:0000315"/>
    <property type="project" value="MGI"/>
</dbReference>
<dbReference type="GO" id="GO:0007614">
    <property type="term" value="P:short-term memory"/>
    <property type="evidence" value="ECO:0000316"/>
    <property type="project" value="MGI"/>
</dbReference>
<dbReference type="GO" id="GO:0048741">
    <property type="term" value="P:skeletal muscle fiber development"/>
    <property type="evidence" value="ECO:0000314"/>
    <property type="project" value="MGI"/>
</dbReference>
<dbReference type="CDD" id="cd12708">
    <property type="entry name" value="RRM_RCAN1"/>
    <property type="match status" value="1"/>
</dbReference>
<dbReference type="FunFam" id="3.30.70.330:FF:000221">
    <property type="entry name" value="calcipressin-1 isoform X1"/>
    <property type="match status" value="1"/>
</dbReference>
<dbReference type="Gene3D" id="3.30.70.330">
    <property type="match status" value="1"/>
</dbReference>
<dbReference type="InterPro" id="IPR006931">
    <property type="entry name" value="Calcipressin"/>
</dbReference>
<dbReference type="InterPro" id="IPR012677">
    <property type="entry name" value="Nucleotide-bd_a/b_plait_sf"/>
</dbReference>
<dbReference type="InterPro" id="IPR035979">
    <property type="entry name" value="RBD_domain_sf"/>
</dbReference>
<dbReference type="InterPro" id="IPR034906">
    <property type="entry name" value="RCAN1_RRM"/>
</dbReference>
<dbReference type="PANTHER" id="PTHR10300">
    <property type="entry name" value="CALCIPRESSIN"/>
    <property type="match status" value="1"/>
</dbReference>
<dbReference type="PANTHER" id="PTHR10300:SF4">
    <property type="entry name" value="CALCIPRESSIN-1"/>
    <property type="match status" value="1"/>
</dbReference>
<dbReference type="Pfam" id="PF04847">
    <property type="entry name" value="Calcipressin"/>
    <property type="match status" value="1"/>
</dbReference>
<dbReference type="SUPFAM" id="SSF54928">
    <property type="entry name" value="RNA-binding domain, RBD"/>
    <property type="match status" value="1"/>
</dbReference>
<proteinExistence type="evidence at protein level"/>
<name>RCAN1_MOUSE</name>